<organism>
    <name type="scientific">Mycobacterium sp. (strain KMS)</name>
    <dbReference type="NCBI Taxonomy" id="189918"/>
    <lineage>
        <taxon>Bacteria</taxon>
        <taxon>Bacillati</taxon>
        <taxon>Actinomycetota</taxon>
        <taxon>Actinomycetes</taxon>
        <taxon>Mycobacteriales</taxon>
        <taxon>Mycobacteriaceae</taxon>
        <taxon>Mycobacterium</taxon>
    </lineage>
</organism>
<evidence type="ECO:0000250" key="1">
    <source>
        <dbReference type="UniProtKB" id="P9WH69"/>
    </source>
</evidence>
<evidence type="ECO:0000305" key="2"/>
<comment type="function">
    <text evidence="1">Probable oxidase that might be involved in lipid metabolism.</text>
</comment>
<comment type="cofactor">
    <cofactor evidence="1">
        <name>Fe cation</name>
        <dbReference type="ChEBI" id="CHEBI:24875"/>
    </cofactor>
    <text evidence="1">Binds 1 Fe cation per subunit.</text>
</comment>
<comment type="cofactor">
    <cofactor evidence="1">
        <name>Mn(2+)</name>
        <dbReference type="ChEBI" id="CHEBI:29035"/>
    </cofactor>
    <text evidence="1">Binds 1 manganese ion per subunit. The iron and manganese ions form a dinuclear manganese-iron cluster.</text>
</comment>
<comment type="subunit">
    <text evidence="1">Homodimer.</text>
</comment>
<comment type="similarity">
    <text evidence="2">Belongs to the ribonucleoside diphosphate reductase small chain family. R2-like ligand binding oxidase subfamily.</text>
</comment>
<gene>
    <name type="ordered locus">Mkms_4280</name>
</gene>
<reference key="1">
    <citation type="submission" date="2006-12" db="EMBL/GenBank/DDBJ databases">
        <title>Complete sequence of chromosome of Mycobacterium sp. KMS.</title>
        <authorList>
            <consortium name="US DOE Joint Genome Institute"/>
            <person name="Copeland A."/>
            <person name="Lucas S."/>
            <person name="Lapidus A."/>
            <person name="Barry K."/>
            <person name="Detter J.C."/>
            <person name="Glavina del Rio T."/>
            <person name="Hammon N."/>
            <person name="Israni S."/>
            <person name="Dalin E."/>
            <person name="Tice H."/>
            <person name="Pitluck S."/>
            <person name="Kiss H."/>
            <person name="Brettin T."/>
            <person name="Bruce D."/>
            <person name="Han C."/>
            <person name="Tapia R."/>
            <person name="Gilna P."/>
            <person name="Schmutz J."/>
            <person name="Larimer F."/>
            <person name="Land M."/>
            <person name="Hauser L."/>
            <person name="Kyrpides N."/>
            <person name="Mikhailova N."/>
            <person name="Miller C.D."/>
            <person name="Richardson P."/>
        </authorList>
    </citation>
    <scope>NUCLEOTIDE SEQUENCE [LARGE SCALE GENOMIC DNA]</scope>
    <source>
        <strain>KMS</strain>
    </source>
</reference>
<proteinExistence type="inferred from homology"/>
<dbReference type="EC" id="1.-.-.-" evidence="1"/>
<dbReference type="EMBL" id="CP000518">
    <property type="protein sequence ID" value="ABL93472.1"/>
    <property type="molecule type" value="Genomic_DNA"/>
</dbReference>
<dbReference type="SMR" id="A1UKW4"/>
<dbReference type="STRING" id="189918.Mkms_4280"/>
<dbReference type="KEGG" id="mkm:Mkms_4280"/>
<dbReference type="HOGENOM" id="CLU_072736_0_0_11"/>
<dbReference type="OrthoDB" id="5489780at2"/>
<dbReference type="GO" id="GO:0046872">
    <property type="term" value="F:metal ion binding"/>
    <property type="evidence" value="ECO:0007669"/>
    <property type="project" value="UniProtKB-KW"/>
</dbReference>
<dbReference type="GO" id="GO:0016491">
    <property type="term" value="F:oxidoreductase activity"/>
    <property type="evidence" value="ECO:0007669"/>
    <property type="project" value="UniProtKB-KW"/>
</dbReference>
<dbReference type="GO" id="GO:0009263">
    <property type="term" value="P:deoxyribonucleotide biosynthetic process"/>
    <property type="evidence" value="ECO:0007669"/>
    <property type="project" value="InterPro"/>
</dbReference>
<dbReference type="CDD" id="cd07911">
    <property type="entry name" value="RNRR2_Rv0233_like"/>
    <property type="match status" value="1"/>
</dbReference>
<dbReference type="Gene3D" id="1.10.620.20">
    <property type="entry name" value="Ribonucleotide Reductase, subunit A"/>
    <property type="match status" value="1"/>
</dbReference>
<dbReference type="InterPro" id="IPR009078">
    <property type="entry name" value="Ferritin-like_SF"/>
</dbReference>
<dbReference type="InterPro" id="IPR033908">
    <property type="entry name" value="R2LOX"/>
</dbReference>
<dbReference type="InterPro" id="IPR012348">
    <property type="entry name" value="RNR-like"/>
</dbReference>
<dbReference type="InterPro" id="IPR000358">
    <property type="entry name" value="RNR_small_fam"/>
</dbReference>
<dbReference type="NCBIfam" id="NF006199">
    <property type="entry name" value="PRK08326.1-2"/>
    <property type="match status" value="1"/>
</dbReference>
<dbReference type="NCBIfam" id="NF006200">
    <property type="entry name" value="PRK08326.1-3"/>
    <property type="match status" value="1"/>
</dbReference>
<dbReference type="NCBIfam" id="NF006201">
    <property type="entry name" value="PRK08326.1-4"/>
    <property type="match status" value="1"/>
</dbReference>
<dbReference type="Pfam" id="PF00268">
    <property type="entry name" value="Ribonuc_red_sm"/>
    <property type="match status" value="1"/>
</dbReference>
<dbReference type="SUPFAM" id="SSF47240">
    <property type="entry name" value="Ferritin-like"/>
    <property type="match status" value="1"/>
</dbReference>
<sequence length="312" mass="35434">MTRTRSDSLAAGGLNWNSMPLKLFAGGNAKFWDPADIDFSRDRADWESLSNLERDWATRLCAQFIAGEEAVTQDIQPFMAAMRAEGRLGDEMYLTQFAFEEAKHTQVFRMWLDAVGMTDDLQCYLDDLPSYRQMFYEELPASLEALATDPSPAAQVRASATYNHVIEGMMALTGYYAWHRICVDRKVLPGMQELVRRIGDDERRHMAWGTFTCRRHVAADDANWEVFENRMNELIPLALSNTDDSFALYDEIPFGFAKEEFQQYAADKGMRRFGTISSARGRALAEIDVDYSPLQLEDTFAAEDSRVLATSA</sequence>
<feature type="chain" id="PRO_0000375430" description="R2-like ligand binding oxidase">
    <location>
        <begin position="1"/>
        <end position="312"/>
    </location>
</feature>
<feature type="binding site" evidence="1">
    <location>
        <position position="68"/>
    </location>
    <ligand>
        <name>Mn(2+)</name>
        <dbReference type="ChEBI" id="CHEBI:29035"/>
    </ligand>
</feature>
<feature type="binding site" evidence="1">
    <location>
        <position position="101"/>
    </location>
    <ligand>
        <name>Fe cation</name>
        <dbReference type="ChEBI" id="CHEBI:24875"/>
    </ligand>
</feature>
<feature type="binding site" evidence="1">
    <location>
        <position position="101"/>
    </location>
    <ligand>
        <name>Mn(2+)</name>
        <dbReference type="ChEBI" id="CHEBI:29035"/>
    </ligand>
</feature>
<feature type="binding site" evidence="1">
    <location>
        <position position="104"/>
    </location>
    <ligand>
        <name>Mn(2+)</name>
        <dbReference type="ChEBI" id="CHEBI:29035"/>
    </ligand>
</feature>
<feature type="binding site" evidence="1">
    <location>
        <position position="167"/>
    </location>
    <ligand>
        <name>Fe cation</name>
        <dbReference type="ChEBI" id="CHEBI:24875"/>
    </ligand>
</feature>
<feature type="binding site" evidence="1">
    <location>
        <position position="202"/>
    </location>
    <ligand>
        <name>Fe cation</name>
        <dbReference type="ChEBI" id="CHEBI:24875"/>
    </ligand>
</feature>
<feature type="binding site" evidence="1">
    <location>
        <position position="205"/>
    </location>
    <ligand>
        <name>Fe cation</name>
        <dbReference type="ChEBI" id="CHEBI:24875"/>
    </ligand>
</feature>
<feature type="cross-link" description="3-(O4'-tyrosyl)-valine (Val-Tyr)" evidence="1">
    <location>
        <begin position="71"/>
        <end position="162"/>
    </location>
</feature>
<keyword id="KW-0408">Iron</keyword>
<keyword id="KW-0464">Manganese</keyword>
<keyword id="KW-0479">Metal-binding</keyword>
<keyword id="KW-0560">Oxidoreductase</keyword>
<name>RIR2H_MYCSK</name>
<protein>
    <recommendedName>
        <fullName evidence="1">R2-like ligand binding oxidase</fullName>
        <ecNumber evidence="1">1.-.-.-</ecNumber>
    </recommendedName>
    <alternativeName>
        <fullName>Ribonucleotide reductase R2 subunit homolog</fullName>
    </alternativeName>
    <alternativeName>
        <fullName>Ribonucleotide reductase small subunit homolog</fullName>
    </alternativeName>
</protein>
<accession>A1UKW4</accession>